<name>RL17_SALA4</name>
<feature type="chain" id="PRO_1000144475" description="Large ribosomal subunit protein bL17">
    <location>
        <begin position="1"/>
        <end position="127"/>
    </location>
</feature>
<comment type="subunit">
    <text evidence="1">Part of the 50S ribosomal subunit. Contacts protein L32.</text>
</comment>
<comment type="similarity">
    <text evidence="1">Belongs to the bacterial ribosomal protein bL17 family.</text>
</comment>
<organism>
    <name type="scientific">Salmonella agona (strain SL483)</name>
    <dbReference type="NCBI Taxonomy" id="454166"/>
    <lineage>
        <taxon>Bacteria</taxon>
        <taxon>Pseudomonadati</taxon>
        <taxon>Pseudomonadota</taxon>
        <taxon>Gammaproteobacteria</taxon>
        <taxon>Enterobacterales</taxon>
        <taxon>Enterobacteriaceae</taxon>
        <taxon>Salmonella</taxon>
    </lineage>
</organism>
<proteinExistence type="inferred from homology"/>
<protein>
    <recommendedName>
        <fullName evidence="1">Large ribosomal subunit protein bL17</fullName>
    </recommendedName>
    <alternativeName>
        <fullName evidence="2">50S ribosomal protein L17</fullName>
    </alternativeName>
</protein>
<gene>
    <name evidence="1" type="primary">rplQ</name>
    <name type="ordered locus">SeAg_B3609</name>
</gene>
<keyword id="KW-0687">Ribonucleoprotein</keyword>
<keyword id="KW-0689">Ribosomal protein</keyword>
<reference key="1">
    <citation type="journal article" date="2011" name="J. Bacteriol.">
        <title>Comparative genomics of 28 Salmonella enterica isolates: evidence for CRISPR-mediated adaptive sublineage evolution.</title>
        <authorList>
            <person name="Fricke W.F."/>
            <person name="Mammel M.K."/>
            <person name="McDermott P.F."/>
            <person name="Tartera C."/>
            <person name="White D.G."/>
            <person name="Leclerc J.E."/>
            <person name="Ravel J."/>
            <person name="Cebula T.A."/>
        </authorList>
    </citation>
    <scope>NUCLEOTIDE SEQUENCE [LARGE SCALE GENOMIC DNA]</scope>
    <source>
        <strain>SL483</strain>
    </source>
</reference>
<dbReference type="EMBL" id="CP001138">
    <property type="protein sequence ID" value="ACH50336.1"/>
    <property type="molecule type" value="Genomic_DNA"/>
</dbReference>
<dbReference type="RefSeq" id="WP_001216370.1">
    <property type="nucleotide sequence ID" value="NC_011149.1"/>
</dbReference>
<dbReference type="SMR" id="B5F7S0"/>
<dbReference type="GeneID" id="89546962"/>
<dbReference type="KEGG" id="sea:SeAg_B3609"/>
<dbReference type="HOGENOM" id="CLU_074407_2_0_6"/>
<dbReference type="Proteomes" id="UP000008819">
    <property type="component" value="Chromosome"/>
</dbReference>
<dbReference type="GO" id="GO:0022625">
    <property type="term" value="C:cytosolic large ribosomal subunit"/>
    <property type="evidence" value="ECO:0007669"/>
    <property type="project" value="TreeGrafter"/>
</dbReference>
<dbReference type="GO" id="GO:0003735">
    <property type="term" value="F:structural constituent of ribosome"/>
    <property type="evidence" value="ECO:0007669"/>
    <property type="project" value="InterPro"/>
</dbReference>
<dbReference type="GO" id="GO:0006412">
    <property type="term" value="P:translation"/>
    <property type="evidence" value="ECO:0007669"/>
    <property type="project" value="UniProtKB-UniRule"/>
</dbReference>
<dbReference type="FunFam" id="3.90.1030.10:FF:000001">
    <property type="entry name" value="50S ribosomal protein L17"/>
    <property type="match status" value="1"/>
</dbReference>
<dbReference type="Gene3D" id="3.90.1030.10">
    <property type="entry name" value="Ribosomal protein L17"/>
    <property type="match status" value="1"/>
</dbReference>
<dbReference type="HAMAP" id="MF_01368">
    <property type="entry name" value="Ribosomal_bL17"/>
    <property type="match status" value="1"/>
</dbReference>
<dbReference type="InterPro" id="IPR000456">
    <property type="entry name" value="Ribosomal_bL17"/>
</dbReference>
<dbReference type="InterPro" id="IPR047859">
    <property type="entry name" value="Ribosomal_bL17_CS"/>
</dbReference>
<dbReference type="InterPro" id="IPR036373">
    <property type="entry name" value="Ribosomal_bL17_sf"/>
</dbReference>
<dbReference type="NCBIfam" id="TIGR00059">
    <property type="entry name" value="L17"/>
    <property type="match status" value="1"/>
</dbReference>
<dbReference type="PANTHER" id="PTHR14413:SF16">
    <property type="entry name" value="LARGE RIBOSOMAL SUBUNIT PROTEIN BL17M"/>
    <property type="match status" value="1"/>
</dbReference>
<dbReference type="PANTHER" id="PTHR14413">
    <property type="entry name" value="RIBOSOMAL PROTEIN L17"/>
    <property type="match status" value="1"/>
</dbReference>
<dbReference type="Pfam" id="PF01196">
    <property type="entry name" value="Ribosomal_L17"/>
    <property type="match status" value="1"/>
</dbReference>
<dbReference type="SUPFAM" id="SSF64263">
    <property type="entry name" value="Prokaryotic ribosomal protein L17"/>
    <property type="match status" value="1"/>
</dbReference>
<dbReference type="PROSITE" id="PS01167">
    <property type="entry name" value="RIBOSOMAL_L17"/>
    <property type="match status" value="1"/>
</dbReference>
<evidence type="ECO:0000255" key="1">
    <source>
        <dbReference type="HAMAP-Rule" id="MF_01368"/>
    </source>
</evidence>
<evidence type="ECO:0000305" key="2"/>
<sequence length="127" mass="14395">MRHRKSGRQLNRNSSHRQAMFRNMAGSLVRHEIIKTTLPKAKELRRVVEPLITLAKTDSVANRRLAFARTRDNEIVAKLFNELGPRFASRAGGYTRILKCGFRAGDNAPMAYIELVDRSEKTEAAAE</sequence>
<accession>B5F7S0</accession>